<protein>
    <recommendedName>
        <fullName evidence="1">Small ribosomal subunit protein uS13</fullName>
    </recommendedName>
    <alternativeName>
        <fullName evidence="3">30S ribosomal protein S13</fullName>
    </alternativeName>
</protein>
<comment type="function">
    <text evidence="1">Located at the top of the head of the 30S subunit, it contacts several helices of the 16S rRNA. In the 70S ribosome it contacts the 23S rRNA (bridge B1a) and protein L5 of the 50S subunit (bridge B1b), connecting the 2 subunits; these bridges are implicated in subunit movement. Contacts the tRNAs in the A and P-sites.</text>
</comment>
<comment type="subunit">
    <text evidence="1">Part of the 30S ribosomal subunit. Forms a loose heterodimer with protein S19. Forms two bridges to the 50S subunit in the 70S ribosome.</text>
</comment>
<comment type="similarity">
    <text evidence="1">Belongs to the universal ribosomal protein uS13 family.</text>
</comment>
<keyword id="KW-0687">Ribonucleoprotein</keyword>
<keyword id="KW-0689">Ribosomal protein</keyword>
<keyword id="KW-0694">RNA-binding</keyword>
<keyword id="KW-0699">rRNA-binding</keyword>
<keyword id="KW-0820">tRNA-binding</keyword>
<name>RS13_LACDB</name>
<proteinExistence type="inferred from homology"/>
<evidence type="ECO:0000255" key="1">
    <source>
        <dbReference type="HAMAP-Rule" id="MF_01315"/>
    </source>
</evidence>
<evidence type="ECO:0000256" key="2">
    <source>
        <dbReference type="SAM" id="MobiDB-lite"/>
    </source>
</evidence>
<evidence type="ECO:0000305" key="3"/>
<organism>
    <name type="scientific">Lactobacillus delbrueckii subsp. bulgaricus (strain ATCC BAA-365 / Lb-18)</name>
    <dbReference type="NCBI Taxonomy" id="321956"/>
    <lineage>
        <taxon>Bacteria</taxon>
        <taxon>Bacillati</taxon>
        <taxon>Bacillota</taxon>
        <taxon>Bacilli</taxon>
        <taxon>Lactobacillales</taxon>
        <taxon>Lactobacillaceae</taxon>
        <taxon>Lactobacillus</taxon>
    </lineage>
</organism>
<feature type="chain" id="PRO_0000306628" description="Small ribosomal subunit protein uS13">
    <location>
        <begin position="1"/>
        <end position="116"/>
    </location>
</feature>
<feature type="region of interest" description="Disordered" evidence="2">
    <location>
        <begin position="92"/>
        <end position="116"/>
    </location>
</feature>
<feature type="compositionally biased region" description="Basic residues" evidence="2">
    <location>
        <begin position="106"/>
        <end position="116"/>
    </location>
</feature>
<accession>Q04BZ1</accession>
<sequence length="116" mass="13171">MARIAGVDLPRDKRIVIALTYIYGIGEHTAQEICAAAGVSEDVRSKDLTPEQQEKLRAEVDKYRVEGDLRREVSMNIKRLVDIGSYRGIRHRRGLPVRGQNTKNNARTRKGAKRSR</sequence>
<reference key="1">
    <citation type="journal article" date="2006" name="Proc. Natl. Acad. Sci. U.S.A.">
        <title>Comparative genomics of the lactic acid bacteria.</title>
        <authorList>
            <person name="Makarova K.S."/>
            <person name="Slesarev A."/>
            <person name="Wolf Y.I."/>
            <person name="Sorokin A."/>
            <person name="Mirkin B."/>
            <person name="Koonin E.V."/>
            <person name="Pavlov A."/>
            <person name="Pavlova N."/>
            <person name="Karamychev V."/>
            <person name="Polouchine N."/>
            <person name="Shakhova V."/>
            <person name="Grigoriev I."/>
            <person name="Lou Y."/>
            <person name="Rohksar D."/>
            <person name="Lucas S."/>
            <person name="Huang K."/>
            <person name="Goodstein D.M."/>
            <person name="Hawkins T."/>
            <person name="Plengvidhya V."/>
            <person name="Welker D."/>
            <person name="Hughes J."/>
            <person name="Goh Y."/>
            <person name="Benson A."/>
            <person name="Baldwin K."/>
            <person name="Lee J.-H."/>
            <person name="Diaz-Muniz I."/>
            <person name="Dosti B."/>
            <person name="Smeianov V."/>
            <person name="Wechter W."/>
            <person name="Barabote R."/>
            <person name="Lorca G."/>
            <person name="Altermann E."/>
            <person name="Barrangou R."/>
            <person name="Ganesan B."/>
            <person name="Xie Y."/>
            <person name="Rawsthorne H."/>
            <person name="Tamir D."/>
            <person name="Parker C."/>
            <person name="Breidt F."/>
            <person name="Broadbent J.R."/>
            <person name="Hutkins R."/>
            <person name="O'Sullivan D."/>
            <person name="Steele J."/>
            <person name="Unlu G."/>
            <person name="Saier M.H. Jr."/>
            <person name="Klaenhammer T."/>
            <person name="Richardson P."/>
            <person name="Kozyavkin S."/>
            <person name="Weimer B.C."/>
            <person name="Mills D.A."/>
        </authorList>
    </citation>
    <scope>NUCLEOTIDE SEQUENCE [LARGE SCALE GENOMIC DNA]</scope>
    <source>
        <strain>ATCC BAA-365 / Lb-18</strain>
    </source>
</reference>
<gene>
    <name evidence="1" type="primary">rpsM</name>
    <name type="ordered locus">LBUL_0374</name>
</gene>
<dbReference type="EMBL" id="CP000412">
    <property type="protein sequence ID" value="ABJ58031.1"/>
    <property type="molecule type" value="Genomic_DNA"/>
</dbReference>
<dbReference type="RefSeq" id="WP_003620856.1">
    <property type="nucleotide sequence ID" value="NC_008529.1"/>
</dbReference>
<dbReference type="SMR" id="Q04BZ1"/>
<dbReference type="KEGG" id="lbu:LBUL_0374"/>
<dbReference type="HOGENOM" id="CLU_103849_1_1_9"/>
<dbReference type="BioCyc" id="LDEL321956:LBUL_RS01745-MONOMER"/>
<dbReference type="GO" id="GO:0005829">
    <property type="term" value="C:cytosol"/>
    <property type="evidence" value="ECO:0007669"/>
    <property type="project" value="TreeGrafter"/>
</dbReference>
<dbReference type="GO" id="GO:0015935">
    <property type="term" value="C:small ribosomal subunit"/>
    <property type="evidence" value="ECO:0007669"/>
    <property type="project" value="TreeGrafter"/>
</dbReference>
<dbReference type="GO" id="GO:0019843">
    <property type="term" value="F:rRNA binding"/>
    <property type="evidence" value="ECO:0007669"/>
    <property type="project" value="UniProtKB-UniRule"/>
</dbReference>
<dbReference type="GO" id="GO:0003735">
    <property type="term" value="F:structural constituent of ribosome"/>
    <property type="evidence" value="ECO:0007669"/>
    <property type="project" value="InterPro"/>
</dbReference>
<dbReference type="GO" id="GO:0000049">
    <property type="term" value="F:tRNA binding"/>
    <property type="evidence" value="ECO:0007669"/>
    <property type="project" value="UniProtKB-UniRule"/>
</dbReference>
<dbReference type="GO" id="GO:0006412">
    <property type="term" value="P:translation"/>
    <property type="evidence" value="ECO:0007669"/>
    <property type="project" value="UniProtKB-UniRule"/>
</dbReference>
<dbReference type="FunFam" id="1.10.8.50:FF:000001">
    <property type="entry name" value="30S ribosomal protein S13"/>
    <property type="match status" value="1"/>
</dbReference>
<dbReference type="FunFam" id="4.10.910.10:FF:000001">
    <property type="entry name" value="30S ribosomal protein S13"/>
    <property type="match status" value="1"/>
</dbReference>
<dbReference type="Gene3D" id="1.10.8.50">
    <property type="match status" value="1"/>
</dbReference>
<dbReference type="Gene3D" id="4.10.910.10">
    <property type="entry name" value="30s ribosomal protein s13, domain 2"/>
    <property type="match status" value="1"/>
</dbReference>
<dbReference type="HAMAP" id="MF_01315">
    <property type="entry name" value="Ribosomal_uS13"/>
    <property type="match status" value="1"/>
</dbReference>
<dbReference type="InterPro" id="IPR027437">
    <property type="entry name" value="Rbsml_uS13_C"/>
</dbReference>
<dbReference type="InterPro" id="IPR001892">
    <property type="entry name" value="Ribosomal_uS13"/>
</dbReference>
<dbReference type="InterPro" id="IPR010979">
    <property type="entry name" value="Ribosomal_uS13-like_H2TH"/>
</dbReference>
<dbReference type="InterPro" id="IPR019980">
    <property type="entry name" value="Ribosomal_uS13_bac-type"/>
</dbReference>
<dbReference type="InterPro" id="IPR018269">
    <property type="entry name" value="Ribosomal_uS13_CS"/>
</dbReference>
<dbReference type="NCBIfam" id="TIGR03631">
    <property type="entry name" value="uS13_bact"/>
    <property type="match status" value="1"/>
</dbReference>
<dbReference type="PANTHER" id="PTHR10871">
    <property type="entry name" value="30S RIBOSOMAL PROTEIN S13/40S RIBOSOMAL PROTEIN S18"/>
    <property type="match status" value="1"/>
</dbReference>
<dbReference type="PANTHER" id="PTHR10871:SF1">
    <property type="entry name" value="SMALL RIBOSOMAL SUBUNIT PROTEIN US13M"/>
    <property type="match status" value="1"/>
</dbReference>
<dbReference type="Pfam" id="PF00416">
    <property type="entry name" value="Ribosomal_S13"/>
    <property type="match status" value="1"/>
</dbReference>
<dbReference type="PIRSF" id="PIRSF002134">
    <property type="entry name" value="Ribosomal_S13"/>
    <property type="match status" value="1"/>
</dbReference>
<dbReference type="SUPFAM" id="SSF46946">
    <property type="entry name" value="S13-like H2TH domain"/>
    <property type="match status" value="1"/>
</dbReference>
<dbReference type="PROSITE" id="PS00646">
    <property type="entry name" value="RIBOSOMAL_S13_1"/>
    <property type="match status" value="1"/>
</dbReference>
<dbReference type="PROSITE" id="PS50159">
    <property type="entry name" value="RIBOSOMAL_S13_2"/>
    <property type="match status" value="1"/>
</dbReference>